<reference key="1">
    <citation type="journal article" date="1995" name="Microbiology">
        <title>Characterization of the Mycobacterium tuberculosis erp gene encoding a potential cell surface protein with repetitive structures.</title>
        <authorList>
            <person name="Berthet F.-X."/>
            <person name="Rauzier J."/>
            <person name="Lim E.M."/>
            <person name="Philipp W."/>
            <person name="Gicquel B."/>
            <person name="Portnoi D."/>
        </authorList>
    </citation>
    <scope>NUCLEOTIDE SEQUENCE [GENOMIC DNA]</scope>
    <source>
        <strain>Mt103</strain>
    </source>
</reference>
<reference key="2">
    <citation type="journal article" date="1998" name="Nature">
        <title>Deciphering the biology of Mycobacterium tuberculosis from the complete genome sequence.</title>
        <authorList>
            <person name="Cole S.T."/>
            <person name="Brosch R."/>
            <person name="Parkhill J."/>
            <person name="Garnier T."/>
            <person name="Churcher C.M."/>
            <person name="Harris D.E."/>
            <person name="Gordon S.V."/>
            <person name="Eiglmeier K."/>
            <person name="Gas S."/>
            <person name="Barry C.E. III"/>
            <person name="Tekaia F."/>
            <person name="Badcock K."/>
            <person name="Basham D."/>
            <person name="Brown D."/>
            <person name="Chillingworth T."/>
            <person name="Connor R."/>
            <person name="Davies R.M."/>
            <person name="Devlin K."/>
            <person name="Feltwell T."/>
            <person name="Gentles S."/>
            <person name="Hamlin N."/>
            <person name="Holroyd S."/>
            <person name="Hornsby T."/>
            <person name="Jagels K."/>
            <person name="Krogh A."/>
            <person name="McLean J."/>
            <person name="Moule S."/>
            <person name="Murphy L.D."/>
            <person name="Oliver S."/>
            <person name="Osborne J."/>
            <person name="Quail M.A."/>
            <person name="Rajandream M.A."/>
            <person name="Rogers J."/>
            <person name="Rutter S."/>
            <person name="Seeger K."/>
            <person name="Skelton S."/>
            <person name="Squares S."/>
            <person name="Squares R."/>
            <person name="Sulston J.E."/>
            <person name="Taylor K."/>
            <person name="Whitehead S."/>
            <person name="Barrell B.G."/>
        </authorList>
    </citation>
    <scope>NUCLEOTIDE SEQUENCE [LARGE SCALE GENOMIC DNA]</scope>
    <source>
        <strain>ATCC 25618 / H37Rv</strain>
    </source>
</reference>
<reference key="3">
    <citation type="journal article" date="1995" name="J. Bacteriol.">
        <title>Identification of Mycobacterium tuberculosis DNA sequences encoding exported proteins by using phoA gene fusions.</title>
        <authorList>
            <person name="Lim E.M."/>
            <person name="Rauzier J."/>
            <person name="Timm J."/>
            <person name="Torrea G."/>
            <person name="Murray A."/>
            <person name="Gicquel B."/>
            <person name="Portnoi D."/>
        </authorList>
    </citation>
    <scope>NUCLEOTIDE SEQUENCE [GENOMIC DNA] OF 1-24</scope>
    <source>
        <strain>Mt103</strain>
    </source>
</reference>
<reference key="4">
    <citation type="journal article" date="1998" name="Science">
        <title>Attenuation of virulence by disruption of the Mycobacterium tuberculosis erp gene.</title>
        <authorList>
            <person name="Berthet F.-X."/>
            <person name="Lagranderie M."/>
            <person name="Gounon P."/>
            <person name="Laurent-Winter C."/>
            <person name="Ensergueix D."/>
            <person name="Chavarot P."/>
            <person name="Thouron F."/>
            <person name="Maranghi E."/>
            <person name="Pelicic V."/>
            <person name="Portnoi D."/>
            <person name="Marchal G."/>
            <person name="Gicquel B."/>
        </authorList>
    </citation>
    <scope>CHARACTERIZATION</scope>
</reference>
<accession>P9WIQ7</accession>
<accession>L0TDV1</accession>
<accession>O53586</accession>
<accession>P0A5P4</accession>
<accession>Q50793</accession>
<accession>Q53468</accession>
<comment type="function">
    <text>Surface-exposed protein required for multiplication and intracellular growth.</text>
</comment>
<comment type="subcellular location">
    <subcellularLocation>
        <location evidence="3">Cell membrane</location>
        <topology evidence="3">Single-pass type I membrane protein</topology>
    </subcellularLocation>
</comment>
<comment type="similarity">
    <text evidence="3">To M.leprae 28 kDa antigen.</text>
</comment>
<proteinExistence type="evidence at protein level"/>
<sequence length="284" mass="27700">MPNRRRRKLSTAMSAVAALAVASPCAYFLVYESTETTERPEHHEFKQAAVLTDLPGELMSALSQGLSQFGINIPPVPSLTGSGDASTGLTGPGLTSPGLTSPGLTSPGLTDPALTSPGLTPTLPGSLAAPGTTLAPTPGVGANPALTNPALTSPTGATPGLTSPTGLDPALGGANEIPITTPVGLDPGADGTYPILGDPTLGTIPSSPATTSTGGGGLVNDVMQVANELGASQAIDLLKGVLMPSIMQAVQNGGAAAPAASPPVPPIPAAAAVPPTDPITVPVA</sequence>
<organism>
    <name type="scientific">Mycobacterium tuberculosis (strain ATCC 25618 / H37Rv)</name>
    <dbReference type="NCBI Taxonomy" id="83332"/>
    <lineage>
        <taxon>Bacteria</taxon>
        <taxon>Bacillati</taxon>
        <taxon>Actinomycetota</taxon>
        <taxon>Actinomycetes</taxon>
        <taxon>Mycobacteriales</taxon>
        <taxon>Mycobacteriaceae</taxon>
        <taxon>Mycobacterium</taxon>
        <taxon>Mycobacterium tuberculosis complex</taxon>
    </lineage>
</organism>
<feature type="signal peptide" evidence="1">
    <location>
        <begin position="1"/>
        <end position="22"/>
    </location>
</feature>
<feature type="chain" id="PRO_0000021201" description="Exported repetitive protein">
    <location>
        <begin position="23"/>
        <end position="284"/>
    </location>
</feature>
<feature type="topological domain" description="Extracellular" evidence="1">
    <location>
        <begin position="23"/>
        <end position="252"/>
    </location>
</feature>
<feature type="transmembrane region" description="Helical" evidence="1">
    <location>
        <begin position="253"/>
        <end position="273"/>
    </location>
</feature>
<feature type="topological domain" description="Cytoplasmic" evidence="1">
    <location>
        <begin position="274"/>
        <end position="284"/>
    </location>
</feature>
<feature type="repeat" description="1-1">
    <location>
        <begin position="92"/>
        <end position="96"/>
    </location>
</feature>
<feature type="repeat" description="1-2">
    <location>
        <begin position="97"/>
        <end position="101"/>
    </location>
</feature>
<feature type="repeat" description="1-3">
    <location>
        <begin position="102"/>
        <end position="106"/>
    </location>
</feature>
<feature type="repeat" description="1-4">
    <location>
        <begin position="107"/>
        <end position="111"/>
    </location>
</feature>
<feature type="repeat" description="1-5">
    <location>
        <begin position="112"/>
        <end position="116"/>
    </location>
</feature>
<feature type="repeat" description="1-6">
    <location>
        <begin position="117"/>
        <end position="121"/>
    </location>
</feature>
<feature type="repeat" description="2-1">
    <location>
        <begin position="144"/>
        <end position="148"/>
    </location>
</feature>
<feature type="repeat" description="2-2">
    <location>
        <begin position="149"/>
        <end position="153"/>
    </location>
</feature>
<feature type="repeat" description="2-3">
    <location>
        <begin position="154"/>
        <end position="158"/>
    </location>
</feature>
<feature type="repeat" description="2-4">
    <location>
        <begin position="159"/>
        <end position="163"/>
    </location>
</feature>
<feature type="repeat" description="2-5">
    <location>
        <begin position="164"/>
        <end position="168"/>
    </location>
</feature>
<feature type="repeat" description="2-6">
    <location>
        <begin position="169"/>
        <end position="173"/>
    </location>
</feature>
<feature type="region of interest" description="Disordered" evidence="2">
    <location>
        <begin position="80"/>
        <end position="216"/>
    </location>
</feature>
<feature type="region of interest" description="6 X 5 AA tandem repeats of P-[GA]-L-T-S">
    <location>
        <begin position="92"/>
        <end position="121"/>
    </location>
</feature>
<feature type="region of interest" description="6 X 5 AA approximate tandem repeats of P-[ATG]-[LG]-X-X">
    <location>
        <begin position="144"/>
        <end position="173"/>
    </location>
</feature>
<feature type="compositionally biased region" description="Low complexity" evidence="2">
    <location>
        <begin position="86"/>
        <end position="110"/>
    </location>
</feature>
<feature type="compositionally biased region" description="Polar residues" evidence="2">
    <location>
        <begin position="145"/>
        <end position="165"/>
    </location>
</feature>
<feature type="compositionally biased region" description="Low complexity" evidence="2">
    <location>
        <begin position="202"/>
        <end position="212"/>
    </location>
</feature>
<feature type="sequence variant" description="In strain: MT103.">
    <original>A</original>
    <variation>V</variation>
    <location>
        <position position="256"/>
    </location>
</feature>
<feature type="sequence conflict" description="In Ref. 3." evidence="3" ref="3">
    <original>R</original>
    <variation>S</variation>
    <location>
        <position position="5"/>
    </location>
</feature>
<feature type="sequence conflict" description="In Ref. 3." evidence="3" ref="3">
    <original>R</original>
    <variation>S</variation>
    <location>
        <position position="7"/>
    </location>
</feature>
<evidence type="ECO:0000255" key="1"/>
<evidence type="ECO:0000256" key="2">
    <source>
        <dbReference type="SAM" id="MobiDB-lite"/>
    </source>
</evidence>
<evidence type="ECO:0000305" key="3"/>
<gene>
    <name type="primary">erp</name>
    <name type="synonym">pirG</name>
    <name type="ordered locus">Rv3810</name>
    <name type="ORF">MTV026.15</name>
</gene>
<protein>
    <recommendedName>
        <fullName>Exported repetitive protein</fullName>
    </recommendedName>
    <alternativeName>
        <fullName>Cell surface protein PirG</fullName>
    </alternativeName>
    <alternativeName>
        <fullName>EXP53</fullName>
    </alternativeName>
</protein>
<dbReference type="EMBL" id="L38851">
    <property type="protein sequence ID" value="AAA96136.1"/>
    <property type="molecule type" value="Genomic_DNA"/>
</dbReference>
<dbReference type="EMBL" id="AL123456">
    <property type="protein sequence ID" value="CCP46639.1"/>
    <property type="molecule type" value="Genomic_DNA"/>
</dbReference>
<dbReference type="EMBL" id="S74667">
    <property type="protein sequence ID" value="AAB32855.1"/>
    <property type="molecule type" value="Genomic_DNA"/>
</dbReference>
<dbReference type="PIR" id="F70888">
    <property type="entry name" value="F70888"/>
</dbReference>
<dbReference type="RefSeq" id="NP_218327.1">
    <property type="nucleotide sequence ID" value="NC_000962.3"/>
</dbReference>
<dbReference type="RefSeq" id="WP_003420801.1">
    <property type="nucleotide sequence ID" value="NZ_NVQJ01000022.1"/>
</dbReference>
<dbReference type="STRING" id="83332.Rv3810"/>
<dbReference type="PaxDb" id="83332-Rv3810"/>
<dbReference type="DNASU" id="886139"/>
<dbReference type="GeneID" id="886139"/>
<dbReference type="KEGG" id="mtu:Rv3810"/>
<dbReference type="KEGG" id="mtv:RVBD_3810"/>
<dbReference type="TubercuList" id="Rv3810"/>
<dbReference type="eggNOG" id="ENOG5033CP4">
    <property type="taxonomic scope" value="Bacteria"/>
</dbReference>
<dbReference type="InParanoid" id="P9WIQ7"/>
<dbReference type="OrthoDB" id="4641740at2"/>
<dbReference type="PHI-base" id="PHI:7044"/>
<dbReference type="Proteomes" id="UP000001584">
    <property type="component" value="Chromosome"/>
</dbReference>
<dbReference type="GO" id="GO:0005576">
    <property type="term" value="C:extracellular region"/>
    <property type="evidence" value="ECO:0000314"/>
    <property type="project" value="MTBBASE"/>
</dbReference>
<dbReference type="GO" id="GO:0005886">
    <property type="term" value="C:plasma membrane"/>
    <property type="evidence" value="ECO:0007669"/>
    <property type="project" value="UniProtKB-SubCell"/>
</dbReference>
<dbReference type="InterPro" id="IPR008164">
    <property type="entry name" value="XGLTT_repeat"/>
</dbReference>
<dbReference type="Pfam" id="PF01744">
    <property type="entry name" value="GLTT"/>
    <property type="match status" value="1"/>
</dbReference>
<keyword id="KW-1003">Cell membrane</keyword>
<keyword id="KW-0472">Membrane</keyword>
<keyword id="KW-1185">Reference proteome</keyword>
<keyword id="KW-0677">Repeat</keyword>
<keyword id="KW-0732">Signal</keyword>
<keyword id="KW-0812">Transmembrane</keyword>
<keyword id="KW-1133">Transmembrane helix</keyword>
<name>ERP_MYCTU</name>